<sequence>MAAVSDIPVHLPKLLALFKTVVPKLVNNKHKGQYGRIGVIGGSLEYTGAPYFAAISSIRVGADLAHVFCHSNASAIIKSYSPDLIVHPVLDCVDAVERIAPWLERLHVVVIGPGLGREPGILKTASNVLKLCMDTKKPVVIDADGLFLLNDNLNLICGQPNVILTPNVMEFQRLFGEDDQAARQKMSLLGAGVTVLEKGANDKIYLPHCNEVHSMPSGGSGRRCGGQGDLLSGSLATFFSWSLQSGEPNPALVAACASSYFVKKLNAAAFQKFGRSLLASDMVNQIPSVFQTEFENSDPQ</sequence>
<keyword id="KW-0067">ATP-binding</keyword>
<keyword id="KW-0456">Lyase</keyword>
<keyword id="KW-0520">NAD</keyword>
<keyword id="KW-0521">NADP</keyword>
<keyword id="KW-0547">Nucleotide-binding</keyword>
<keyword id="KW-0597">Phosphoprotein</keyword>
<keyword id="KW-1185">Reference proteome</keyword>
<reference key="1">
    <citation type="journal article" date="2000" name="Science">
        <title>The genome sequence of Drosophila melanogaster.</title>
        <authorList>
            <person name="Adams M.D."/>
            <person name="Celniker S.E."/>
            <person name="Holt R.A."/>
            <person name="Evans C.A."/>
            <person name="Gocayne J.D."/>
            <person name="Amanatides P.G."/>
            <person name="Scherer S.E."/>
            <person name="Li P.W."/>
            <person name="Hoskins R.A."/>
            <person name="Galle R.F."/>
            <person name="George R.A."/>
            <person name="Lewis S.E."/>
            <person name="Richards S."/>
            <person name="Ashburner M."/>
            <person name="Henderson S.N."/>
            <person name="Sutton G.G."/>
            <person name="Wortman J.R."/>
            <person name="Yandell M.D."/>
            <person name="Zhang Q."/>
            <person name="Chen L.X."/>
            <person name="Brandon R.C."/>
            <person name="Rogers Y.-H.C."/>
            <person name="Blazej R.G."/>
            <person name="Champe M."/>
            <person name="Pfeiffer B.D."/>
            <person name="Wan K.H."/>
            <person name="Doyle C."/>
            <person name="Baxter E.G."/>
            <person name="Helt G."/>
            <person name="Nelson C.R."/>
            <person name="Miklos G.L.G."/>
            <person name="Abril J.F."/>
            <person name="Agbayani A."/>
            <person name="An H.-J."/>
            <person name="Andrews-Pfannkoch C."/>
            <person name="Baldwin D."/>
            <person name="Ballew R.M."/>
            <person name="Basu A."/>
            <person name="Baxendale J."/>
            <person name="Bayraktaroglu L."/>
            <person name="Beasley E.M."/>
            <person name="Beeson K.Y."/>
            <person name="Benos P.V."/>
            <person name="Berman B.P."/>
            <person name="Bhandari D."/>
            <person name="Bolshakov S."/>
            <person name="Borkova D."/>
            <person name="Botchan M.R."/>
            <person name="Bouck J."/>
            <person name="Brokstein P."/>
            <person name="Brottier P."/>
            <person name="Burtis K.C."/>
            <person name="Busam D.A."/>
            <person name="Butler H."/>
            <person name="Cadieu E."/>
            <person name="Center A."/>
            <person name="Chandra I."/>
            <person name="Cherry J.M."/>
            <person name="Cawley S."/>
            <person name="Dahlke C."/>
            <person name="Davenport L.B."/>
            <person name="Davies P."/>
            <person name="de Pablos B."/>
            <person name="Delcher A."/>
            <person name="Deng Z."/>
            <person name="Mays A.D."/>
            <person name="Dew I."/>
            <person name="Dietz S.M."/>
            <person name="Dodson K."/>
            <person name="Doup L.E."/>
            <person name="Downes M."/>
            <person name="Dugan-Rocha S."/>
            <person name="Dunkov B.C."/>
            <person name="Dunn P."/>
            <person name="Durbin K.J."/>
            <person name="Evangelista C.C."/>
            <person name="Ferraz C."/>
            <person name="Ferriera S."/>
            <person name="Fleischmann W."/>
            <person name="Fosler C."/>
            <person name="Gabrielian A.E."/>
            <person name="Garg N.S."/>
            <person name="Gelbart W.M."/>
            <person name="Glasser K."/>
            <person name="Glodek A."/>
            <person name="Gong F."/>
            <person name="Gorrell J.H."/>
            <person name="Gu Z."/>
            <person name="Guan P."/>
            <person name="Harris M."/>
            <person name="Harris N.L."/>
            <person name="Harvey D.A."/>
            <person name="Heiman T.J."/>
            <person name="Hernandez J.R."/>
            <person name="Houck J."/>
            <person name="Hostin D."/>
            <person name="Houston K.A."/>
            <person name="Howland T.J."/>
            <person name="Wei M.-H."/>
            <person name="Ibegwam C."/>
            <person name="Jalali M."/>
            <person name="Kalush F."/>
            <person name="Karpen G.H."/>
            <person name="Ke Z."/>
            <person name="Kennison J.A."/>
            <person name="Ketchum K.A."/>
            <person name="Kimmel B.E."/>
            <person name="Kodira C.D."/>
            <person name="Kraft C.L."/>
            <person name="Kravitz S."/>
            <person name="Kulp D."/>
            <person name="Lai Z."/>
            <person name="Lasko P."/>
            <person name="Lei Y."/>
            <person name="Levitsky A.A."/>
            <person name="Li J.H."/>
            <person name="Li Z."/>
            <person name="Liang Y."/>
            <person name="Lin X."/>
            <person name="Liu X."/>
            <person name="Mattei B."/>
            <person name="McIntosh T.C."/>
            <person name="McLeod M.P."/>
            <person name="McPherson D."/>
            <person name="Merkulov G."/>
            <person name="Milshina N.V."/>
            <person name="Mobarry C."/>
            <person name="Morris J."/>
            <person name="Moshrefi A."/>
            <person name="Mount S.M."/>
            <person name="Moy M."/>
            <person name="Murphy B."/>
            <person name="Murphy L."/>
            <person name="Muzny D.M."/>
            <person name="Nelson D.L."/>
            <person name="Nelson D.R."/>
            <person name="Nelson K.A."/>
            <person name="Nixon K."/>
            <person name="Nusskern D.R."/>
            <person name="Pacleb J.M."/>
            <person name="Palazzolo M."/>
            <person name="Pittman G.S."/>
            <person name="Pan S."/>
            <person name="Pollard J."/>
            <person name="Puri V."/>
            <person name="Reese M.G."/>
            <person name="Reinert K."/>
            <person name="Remington K."/>
            <person name="Saunders R.D.C."/>
            <person name="Scheeler F."/>
            <person name="Shen H."/>
            <person name="Shue B.C."/>
            <person name="Siden-Kiamos I."/>
            <person name="Simpson M."/>
            <person name="Skupski M.P."/>
            <person name="Smith T.J."/>
            <person name="Spier E."/>
            <person name="Spradling A.C."/>
            <person name="Stapleton M."/>
            <person name="Strong R."/>
            <person name="Sun E."/>
            <person name="Svirskas R."/>
            <person name="Tector C."/>
            <person name="Turner R."/>
            <person name="Venter E."/>
            <person name="Wang A.H."/>
            <person name="Wang X."/>
            <person name="Wang Z.-Y."/>
            <person name="Wassarman D.A."/>
            <person name="Weinstock G.M."/>
            <person name="Weissenbach J."/>
            <person name="Williams S.M."/>
            <person name="Woodage T."/>
            <person name="Worley K.C."/>
            <person name="Wu D."/>
            <person name="Yang S."/>
            <person name="Yao Q.A."/>
            <person name="Ye J."/>
            <person name="Yeh R.-F."/>
            <person name="Zaveri J.S."/>
            <person name="Zhan M."/>
            <person name="Zhang G."/>
            <person name="Zhao Q."/>
            <person name="Zheng L."/>
            <person name="Zheng X.H."/>
            <person name="Zhong F.N."/>
            <person name="Zhong W."/>
            <person name="Zhou X."/>
            <person name="Zhu S.C."/>
            <person name="Zhu X."/>
            <person name="Smith H.O."/>
            <person name="Gibbs R.A."/>
            <person name="Myers E.W."/>
            <person name="Rubin G.M."/>
            <person name="Venter J.C."/>
        </authorList>
    </citation>
    <scope>NUCLEOTIDE SEQUENCE [LARGE SCALE GENOMIC DNA]</scope>
    <source>
        <strain>Berkeley</strain>
    </source>
</reference>
<reference key="2">
    <citation type="journal article" date="2002" name="Genome Biol.">
        <title>Annotation of the Drosophila melanogaster euchromatic genome: a systematic review.</title>
        <authorList>
            <person name="Misra S."/>
            <person name="Crosby M.A."/>
            <person name="Mungall C.J."/>
            <person name="Matthews B.B."/>
            <person name="Campbell K.S."/>
            <person name="Hradecky P."/>
            <person name="Huang Y."/>
            <person name="Kaminker J.S."/>
            <person name="Millburn G.H."/>
            <person name="Prochnik S.E."/>
            <person name="Smith C.D."/>
            <person name="Tupy J.L."/>
            <person name="Whitfield E.J."/>
            <person name="Bayraktaroglu L."/>
            <person name="Berman B.P."/>
            <person name="Bettencourt B.R."/>
            <person name="Celniker S.E."/>
            <person name="de Grey A.D.N.J."/>
            <person name="Drysdale R.A."/>
            <person name="Harris N.L."/>
            <person name="Richter J."/>
            <person name="Russo S."/>
            <person name="Schroeder A.J."/>
            <person name="Shu S.Q."/>
            <person name="Stapleton M."/>
            <person name="Yamada C."/>
            <person name="Ashburner M."/>
            <person name="Gelbart W.M."/>
            <person name="Rubin G.M."/>
            <person name="Lewis S.E."/>
        </authorList>
    </citation>
    <scope>GENOME REANNOTATION</scope>
    <source>
        <strain>Berkeley</strain>
    </source>
</reference>
<reference key="3">
    <citation type="journal article" date="2002" name="Genome Biol.">
        <title>A Drosophila full-length cDNA resource.</title>
        <authorList>
            <person name="Stapleton M."/>
            <person name="Carlson J.W."/>
            <person name="Brokstein P."/>
            <person name="Yu C."/>
            <person name="Champe M."/>
            <person name="George R.A."/>
            <person name="Guarin H."/>
            <person name="Kronmiller B."/>
            <person name="Pacleb J.M."/>
            <person name="Park S."/>
            <person name="Wan K.H."/>
            <person name="Rubin G.M."/>
            <person name="Celniker S.E."/>
        </authorList>
    </citation>
    <scope>NUCLEOTIDE SEQUENCE [LARGE SCALE MRNA]</scope>
    <source>
        <strain>Berkeley</strain>
        <tissue>Embryo</tissue>
    </source>
</reference>
<organism>
    <name type="scientific">Drosophila melanogaster</name>
    <name type="common">Fruit fly</name>
    <dbReference type="NCBI Taxonomy" id="7227"/>
    <lineage>
        <taxon>Eukaryota</taxon>
        <taxon>Metazoa</taxon>
        <taxon>Ecdysozoa</taxon>
        <taxon>Arthropoda</taxon>
        <taxon>Hexapoda</taxon>
        <taxon>Insecta</taxon>
        <taxon>Pterygota</taxon>
        <taxon>Neoptera</taxon>
        <taxon>Endopterygota</taxon>
        <taxon>Diptera</taxon>
        <taxon>Brachycera</taxon>
        <taxon>Muscomorpha</taxon>
        <taxon>Ephydroidea</taxon>
        <taxon>Drosophilidae</taxon>
        <taxon>Drosophila</taxon>
        <taxon>Sophophora</taxon>
    </lineage>
</organism>
<accession>Q9VVW8</accession>
<protein>
    <recommendedName>
        <fullName evidence="1">ATP-dependent (S)-NAD(P)H-hydrate dehydratase</fullName>
        <ecNumber evidence="1">4.2.1.93</ecNumber>
    </recommendedName>
    <alternativeName>
        <fullName evidence="1">ATP-dependent NAD(P)HX dehydratase</fullName>
    </alternativeName>
</protein>
<feature type="chain" id="PRO_0000416165" description="ATP-dependent (S)-NAD(P)H-hydrate dehydratase">
    <location>
        <begin position="1"/>
        <end position="300"/>
    </location>
</feature>
<feature type="domain" description="YjeF C-terminal" evidence="1">
    <location>
        <begin position="14"/>
        <end position="293"/>
    </location>
</feature>
<feature type="binding site" evidence="1">
    <location>
        <position position="114"/>
    </location>
    <ligand>
        <name>(6S)-NADPHX</name>
        <dbReference type="ChEBI" id="CHEBI:64076"/>
    </ligand>
</feature>
<feature type="binding site" evidence="1">
    <location>
        <begin position="167"/>
        <end position="173"/>
    </location>
    <ligand>
        <name>(6S)-NADPHX</name>
        <dbReference type="ChEBI" id="CHEBI:64076"/>
    </ligand>
</feature>
<feature type="binding site" evidence="1">
    <location>
        <begin position="198"/>
        <end position="202"/>
    </location>
    <ligand>
        <name>ATP</name>
        <dbReference type="ChEBI" id="CHEBI:30616"/>
    </ligand>
</feature>
<feature type="binding site" evidence="1">
    <location>
        <begin position="219"/>
        <end position="228"/>
    </location>
    <ligand>
        <name>ATP</name>
        <dbReference type="ChEBI" id="CHEBI:30616"/>
    </ligand>
</feature>
<feature type="binding site" evidence="1">
    <location>
        <position position="229"/>
    </location>
    <ligand>
        <name>(6S)-NADPHX</name>
        <dbReference type="ChEBI" id="CHEBI:64076"/>
    </ligand>
</feature>
<gene>
    <name evidence="2" type="primary">Naxd</name>
    <name evidence="2" type="ORF">CG10424</name>
</gene>
<evidence type="ECO:0000255" key="1">
    <source>
        <dbReference type="HAMAP-Rule" id="MF_03157"/>
    </source>
</evidence>
<evidence type="ECO:0000312" key="2">
    <source>
        <dbReference type="FlyBase" id="FBgn0036848"/>
    </source>
</evidence>
<comment type="function">
    <text evidence="1">Catalyzes the dehydration of the S-form of NAD(P)HX at the expense of ATP, which is converted to ADP. Together with NAD(P)HX epimerase, which catalyzes the epimerization of the S- and R-forms, the enzyme allows the repair of both epimers of NAD(P)HX, a damaged form of NAD(P)H that is a result of enzymatic or heat-dependent hydration.</text>
</comment>
<comment type="catalytic activity">
    <reaction evidence="1">
        <text>(6S)-NADHX + ATP = ADP + phosphate + NADH + H(+)</text>
        <dbReference type="Rhea" id="RHEA:19017"/>
        <dbReference type="ChEBI" id="CHEBI:15378"/>
        <dbReference type="ChEBI" id="CHEBI:30616"/>
        <dbReference type="ChEBI" id="CHEBI:43474"/>
        <dbReference type="ChEBI" id="CHEBI:57945"/>
        <dbReference type="ChEBI" id="CHEBI:64074"/>
        <dbReference type="ChEBI" id="CHEBI:456216"/>
        <dbReference type="EC" id="4.2.1.93"/>
    </reaction>
</comment>
<comment type="catalytic activity">
    <reaction>
        <text>(6S)-NADPHX + ATP = ADP + phosphate + NADPH + H(+)</text>
        <dbReference type="Rhea" id="RHEA:32231"/>
        <dbReference type="ChEBI" id="CHEBI:15378"/>
        <dbReference type="ChEBI" id="CHEBI:30616"/>
        <dbReference type="ChEBI" id="CHEBI:43474"/>
        <dbReference type="ChEBI" id="CHEBI:57783"/>
        <dbReference type="ChEBI" id="CHEBI:64076"/>
        <dbReference type="ChEBI" id="CHEBI:456216"/>
        <dbReference type="EC" id="4.2.1.93"/>
    </reaction>
</comment>
<comment type="cofactor">
    <cofactor evidence="1">
        <name>Mg(2+)</name>
        <dbReference type="ChEBI" id="CHEBI:18420"/>
    </cofactor>
</comment>
<comment type="similarity">
    <text evidence="1">Belongs to the NnrD/CARKD family.</text>
</comment>
<proteinExistence type="evidence at transcript level"/>
<dbReference type="EC" id="4.2.1.93" evidence="1"/>
<dbReference type="EMBL" id="AE014296">
    <property type="protein sequence ID" value="AAF49189.1"/>
    <property type="molecule type" value="Genomic_DNA"/>
</dbReference>
<dbReference type="EMBL" id="AY060665">
    <property type="protein sequence ID" value="AAL28213.1"/>
    <property type="molecule type" value="mRNA"/>
</dbReference>
<dbReference type="RefSeq" id="NP_649090.1">
    <property type="nucleotide sequence ID" value="NM_140833.3"/>
</dbReference>
<dbReference type="SMR" id="Q9VVW8"/>
<dbReference type="BioGRID" id="65362">
    <property type="interactions" value="3"/>
</dbReference>
<dbReference type="FunCoup" id="Q9VVW8">
    <property type="interactions" value="268"/>
</dbReference>
<dbReference type="IntAct" id="Q9VVW8">
    <property type="interactions" value="2"/>
</dbReference>
<dbReference type="STRING" id="7227.FBpp0074800"/>
<dbReference type="PaxDb" id="7227-FBpp0074800"/>
<dbReference type="DNASU" id="40085"/>
<dbReference type="EnsemblMetazoa" id="FBtr0075033">
    <property type="protein sequence ID" value="FBpp0074800"/>
    <property type="gene ID" value="FBgn0036848"/>
</dbReference>
<dbReference type="GeneID" id="40085"/>
<dbReference type="KEGG" id="dme:Dmel_CG10424"/>
<dbReference type="UCSC" id="CG10424-RA">
    <property type="organism name" value="d. melanogaster"/>
</dbReference>
<dbReference type="AGR" id="FB:FBgn0036848"/>
<dbReference type="CTD" id="55739"/>
<dbReference type="FlyBase" id="FBgn0036848">
    <property type="gene designation" value="Naxd"/>
</dbReference>
<dbReference type="VEuPathDB" id="VectorBase:FBgn0036848"/>
<dbReference type="eggNOG" id="KOG3974">
    <property type="taxonomic scope" value="Eukaryota"/>
</dbReference>
<dbReference type="GeneTree" id="ENSGT00390000000917"/>
<dbReference type="HOGENOM" id="CLU_030651_3_0_1"/>
<dbReference type="InParanoid" id="Q9VVW8"/>
<dbReference type="OMA" id="WRAAYHN"/>
<dbReference type="OrthoDB" id="8110916at2759"/>
<dbReference type="PhylomeDB" id="Q9VVW8"/>
<dbReference type="Reactome" id="R-DME-197264">
    <property type="pathway name" value="Nicotinamide salvaging"/>
</dbReference>
<dbReference type="SignaLink" id="Q9VVW8"/>
<dbReference type="BioGRID-ORCS" id="40085">
    <property type="hits" value="0 hits in 1 CRISPR screen"/>
</dbReference>
<dbReference type="GenomeRNAi" id="40085"/>
<dbReference type="PRO" id="PR:Q9VVW8"/>
<dbReference type="Proteomes" id="UP000000803">
    <property type="component" value="Chromosome 3L"/>
</dbReference>
<dbReference type="Bgee" id="FBgn0036848">
    <property type="expression patterns" value="Expressed in seminal fluid secreting gland and 107 other cell types or tissues"/>
</dbReference>
<dbReference type="GO" id="GO:0005829">
    <property type="term" value="C:cytosol"/>
    <property type="evidence" value="ECO:0000250"/>
    <property type="project" value="FlyBase"/>
</dbReference>
<dbReference type="GO" id="GO:0005739">
    <property type="term" value="C:mitochondrion"/>
    <property type="evidence" value="ECO:0000250"/>
    <property type="project" value="FlyBase"/>
</dbReference>
<dbReference type="GO" id="GO:0005524">
    <property type="term" value="F:ATP binding"/>
    <property type="evidence" value="ECO:0007669"/>
    <property type="project" value="UniProtKB-KW"/>
</dbReference>
<dbReference type="GO" id="GO:0047453">
    <property type="term" value="F:ATP-dependent NAD(P)H-hydrate dehydratase activity"/>
    <property type="evidence" value="ECO:0000250"/>
    <property type="project" value="FlyBase"/>
</dbReference>
<dbReference type="GO" id="GO:0110051">
    <property type="term" value="P:metabolite repair"/>
    <property type="evidence" value="ECO:0000250"/>
    <property type="project" value="FlyBase"/>
</dbReference>
<dbReference type="GO" id="GO:0046496">
    <property type="term" value="P:nicotinamide nucleotide metabolic process"/>
    <property type="evidence" value="ECO:0007669"/>
    <property type="project" value="UniProtKB-UniRule"/>
</dbReference>
<dbReference type="CDD" id="cd01171">
    <property type="entry name" value="YXKO-related"/>
    <property type="match status" value="1"/>
</dbReference>
<dbReference type="FunFam" id="3.40.1190.20:FF:000023">
    <property type="entry name" value="ATP-dependent (S)-NAD(P)H-hydrate dehydratase"/>
    <property type="match status" value="1"/>
</dbReference>
<dbReference type="Gene3D" id="3.40.1190.20">
    <property type="match status" value="1"/>
</dbReference>
<dbReference type="HAMAP" id="MF_01965">
    <property type="entry name" value="NADHX_dehydratase"/>
    <property type="match status" value="1"/>
</dbReference>
<dbReference type="InterPro" id="IPR017953">
    <property type="entry name" value="Carbohydrate_kinase_pred_CS"/>
</dbReference>
<dbReference type="InterPro" id="IPR000631">
    <property type="entry name" value="CARKD"/>
</dbReference>
<dbReference type="InterPro" id="IPR029056">
    <property type="entry name" value="Ribokinase-like"/>
</dbReference>
<dbReference type="NCBIfam" id="TIGR00196">
    <property type="entry name" value="yjeF_cterm"/>
    <property type="match status" value="1"/>
</dbReference>
<dbReference type="PANTHER" id="PTHR12592:SF0">
    <property type="entry name" value="ATP-DEPENDENT (S)-NAD(P)H-HYDRATE DEHYDRATASE"/>
    <property type="match status" value="1"/>
</dbReference>
<dbReference type="PANTHER" id="PTHR12592">
    <property type="entry name" value="ATP-DEPENDENT (S)-NAD(P)H-HYDRATE DEHYDRATASE FAMILY MEMBER"/>
    <property type="match status" value="1"/>
</dbReference>
<dbReference type="Pfam" id="PF01256">
    <property type="entry name" value="Carb_kinase"/>
    <property type="match status" value="1"/>
</dbReference>
<dbReference type="SUPFAM" id="SSF53613">
    <property type="entry name" value="Ribokinase-like"/>
    <property type="match status" value="1"/>
</dbReference>
<dbReference type="PROSITE" id="PS01049">
    <property type="entry name" value="YJEF_C_1"/>
    <property type="match status" value="1"/>
</dbReference>
<dbReference type="PROSITE" id="PS51383">
    <property type="entry name" value="YJEF_C_3"/>
    <property type="match status" value="1"/>
</dbReference>
<name>NNRD_DROME</name>